<reference key="1">
    <citation type="submission" date="2008-07" db="EMBL/GenBank/DDBJ databases">
        <title>Complete sequence of Geobacter bemidjiensis BEM.</title>
        <authorList>
            <consortium name="US DOE Joint Genome Institute"/>
            <person name="Lucas S."/>
            <person name="Copeland A."/>
            <person name="Lapidus A."/>
            <person name="Glavina del Rio T."/>
            <person name="Dalin E."/>
            <person name="Tice H."/>
            <person name="Bruce D."/>
            <person name="Goodwin L."/>
            <person name="Pitluck S."/>
            <person name="Kiss H."/>
            <person name="Brettin T."/>
            <person name="Detter J.C."/>
            <person name="Han C."/>
            <person name="Kuske C.R."/>
            <person name="Schmutz J."/>
            <person name="Larimer F."/>
            <person name="Land M."/>
            <person name="Hauser L."/>
            <person name="Kyrpides N."/>
            <person name="Lykidis A."/>
            <person name="Lovley D."/>
            <person name="Richardson P."/>
        </authorList>
    </citation>
    <scope>NUCLEOTIDE SEQUENCE [LARGE SCALE GENOMIC DNA]</scope>
    <source>
        <strain>ATCC BAA-1014 / DSM 16622 / JCM 12645 / Bem</strain>
    </source>
</reference>
<gene>
    <name evidence="1" type="primary">nuoA2</name>
    <name type="ordered locus">Gbem_3926</name>
</gene>
<organism>
    <name type="scientific">Citrifermentans bemidjiense (strain ATCC BAA-1014 / DSM 16622 / JCM 12645 / Bem)</name>
    <name type="common">Geobacter bemidjiensis</name>
    <dbReference type="NCBI Taxonomy" id="404380"/>
    <lineage>
        <taxon>Bacteria</taxon>
        <taxon>Pseudomonadati</taxon>
        <taxon>Thermodesulfobacteriota</taxon>
        <taxon>Desulfuromonadia</taxon>
        <taxon>Geobacterales</taxon>
        <taxon>Geobacteraceae</taxon>
        <taxon>Citrifermentans</taxon>
    </lineage>
</organism>
<sequence length="118" mass="13280">MLGAYLPILVLVVIAVLFGLGSVIFSSLIGQKKPSTVKLAPYECGCEPVGSARERFSIKFYLIAMLFILFDIEAVFLYPWAVLFKRLGMFGLIEMGVFIVILFVGYVYVWKKGALEWE</sequence>
<feature type="chain" id="PRO_0000362690" description="NADH-quinone oxidoreductase subunit A 2">
    <location>
        <begin position="1"/>
        <end position="118"/>
    </location>
</feature>
<feature type="transmembrane region" description="Helical" evidence="1">
    <location>
        <begin position="5"/>
        <end position="25"/>
    </location>
</feature>
<feature type="transmembrane region" description="Helical" evidence="1">
    <location>
        <begin position="62"/>
        <end position="82"/>
    </location>
</feature>
<feature type="transmembrane region" description="Helical" evidence="1">
    <location>
        <begin position="87"/>
        <end position="107"/>
    </location>
</feature>
<keyword id="KW-0997">Cell inner membrane</keyword>
<keyword id="KW-1003">Cell membrane</keyword>
<keyword id="KW-0472">Membrane</keyword>
<keyword id="KW-0520">NAD</keyword>
<keyword id="KW-0874">Quinone</keyword>
<keyword id="KW-1185">Reference proteome</keyword>
<keyword id="KW-1278">Translocase</keyword>
<keyword id="KW-0812">Transmembrane</keyword>
<keyword id="KW-1133">Transmembrane helix</keyword>
<keyword id="KW-0813">Transport</keyword>
<keyword id="KW-0830">Ubiquinone</keyword>
<comment type="function">
    <text evidence="1">NDH-1 shuttles electrons from NADH, via FMN and iron-sulfur (Fe-S) centers, to quinones in the respiratory chain. The immediate electron acceptor for the enzyme in this species is believed to be ubiquinone. Couples the redox reaction to proton translocation (for every two electrons transferred, four hydrogen ions are translocated across the cytoplasmic membrane), and thus conserves the redox energy in a proton gradient.</text>
</comment>
<comment type="catalytic activity">
    <reaction evidence="1">
        <text>a quinone + NADH + 5 H(+)(in) = a quinol + NAD(+) + 4 H(+)(out)</text>
        <dbReference type="Rhea" id="RHEA:57888"/>
        <dbReference type="ChEBI" id="CHEBI:15378"/>
        <dbReference type="ChEBI" id="CHEBI:24646"/>
        <dbReference type="ChEBI" id="CHEBI:57540"/>
        <dbReference type="ChEBI" id="CHEBI:57945"/>
        <dbReference type="ChEBI" id="CHEBI:132124"/>
    </reaction>
</comment>
<comment type="subunit">
    <text evidence="1">NDH-1 is composed of 14 different subunits. Subunits NuoA, H, J, K, L, M, N constitute the membrane sector of the complex.</text>
</comment>
<comment type="subcellular location">
    <subcellularLocation>
        <location evidence="1">Cell inner membrane</location>
        <topology evidence="1">Multi-pass membrane protein</topology>
    </subcellularLocation>
</comment>
<comment type="similarity">
    <text evidence="1">Belongs to the complex I subunit 3 family.</text>
</comment>
<name>NUOA2_CITBB</name>
<accession>B5EFG3</accession>
<evidence type="ECO:0000255" key="1">
    <source>
        <dbReference type="HAMAP-Rule" id="MF_01394"/>
    </source>
</evidence>
<dbReference type="EC" id="7.1.1.-" evidence="1"/>
<dbReference type="EMBL" id="CP001124">
    <property type="protein sequence ID" value="ACH40918.1"/>
    <property type="molecule type" value="Genomic_DNA"/>
</dbReference>
<dbReference type="RefSeq" id="WP_012532352.1">
    <property type="nucleotide sequence ID" value="NC_011146.1"/>
</dbReference>
<dbReference type="SMR" id="B5EFG3"/>
<dbReference type="STRING" id="404380.Gbem_3926"/>
<dbReference type="KEGG" id="gbm:Gbem_3926"/>
<dbReference type="eggNOG" id="COG0838">
    <property type="taxonomic scope" value="Bacteria"/>
</dbReference>
<dbReference type="HOGENOM" id="CLU_119549_3_1_7"/>
<dbReference type="OrthoDB" id="9791970at2"/>
<dbReference type="Proteomes" id="UP000008825">
    <property type="component" value="Chromosome"/>
</dbReference>
<dbReference type="GO" id="GO:0030964">
    <property type="term" value="C:NADH dehydrogenase complex"/>
    <property type="evidence" value="ECO:0007669"/>
    <property type="project" value="TreeGrafter"/>
</dbReference>
<dbReference type="GO" id="GO:0005886">
    <property type="term" value="C:plasma membrane"/>
    <property type="evidence" value="ECO:0007669"/>
    <property type="project" value="UniProtKB-SubCell"/>
</dbReference>
<dbReference type="GO" id="GO:0008137">
    <property type="term" value="F:NADH dehydrogenase (ubiquinone) activity"/>
    <property type="evidence" value="ECO:0007669"/>
    <property type="project" value="InterPro"/>
</dbReference>
<dbReference type="GO" id="GO:0050136">
    <property type="term" value="F:NADH:ubiquinone reductase (non-electrogenic) activity"/>
    <property type="evidence" value="ECO:0007669"/>
    <property type="project" value="UniProtKB-UniRule"/>
</dbReference>
<dbReference type="GO" id="GO:0048038">
    <property type="term" value="F:quinone binding"/>
    <property type="evidence" value="ECO:0007669"/>
    <property type="project" value="UniProtKB-KW"/>
</dbReference>
<dbReference type="FunFam" id="1.20.58.1610:FF:000002">
    <property type="entry name" value="NADH-quinone oxidoreductase subunit A"/>
    <property type="match status" value="1"/>
</dbReference>
<dbReference type="Gene3D" id="1.20.58.1610">
    <property type="entry name" value="NADH:ubiquinone/plastoquinone oxidoreductase, chain 3"/>
    <property type="match status" value="1"/>
</dbReference>
<dbReference type="HAMAP" id="MF_01394">
    <property type="entry name" value="NDH1_NuoA"/>
    <property type="match status" value="1"/>
</dbReference>
<dbReference type="InterPro" id="IPR023043">
    <property type="entry name" value="NAD(P)H_OxRDtase_bac/plastid"/>
</dbReference>
<dbReference type="InterPro" id="IPR000440">
    <property type="entry name" value="NADH_UbQ/plastoQ_OxRdtase_su3"/>
</dbReference>
<dbReference type="InterPro" id="IPR038430">
    <property type="entry name" value="NDAH_ubi_oxred_su3_sf"/>
</dbReference>
<dbReference type="PANTHER" id="PTHR11058:SF22">
    <property type="entry name" value="NADH-QUINONE OXIDOREDUCTASE SUBUNIT A"/>
    <property type="match status" value="1"/>
</dbReference>
<dbReference type="PANTHER" id="PTHR11058">
    <property type="entry name" value="NADH-UBIQUINONE OXIDOREDUCTASE CHAIN 3"/>
    <property type="match status" value="1"/>
</dbReference>
<dbReference type="Pfam" id="PF00507">
    <property type="entry name" value="Oxidored_q4"/>
    <property type="match status" value="1"/>
</dbReference>
<proteinExistence type="inferred from homology"/>
<protein>
    <recommendedName>
        <fullName evidence="1">NADH-quinone oxidoreductase subunit A 2</fullName>
        <ecNumber evidence="1">7.1.1.-</ecNumber>
    </recommendedName>
    <alternativeName>
        <fullName evidence="1">NADH dehydrogenase I subunit A 2</fullName>
    </alternativeName>
    <alternativeName>
        <fullName evidence="1">NDH-1 subunit A 2</fullName>
    </alternativeName>
    <alternativeName>
        <fullName evidence="1">NUO1 2</fullName>
    </alternativeName>
</protein>